<name>RPO11_SACI7</name>
<comment type="function">
    <text evidence="1">DNA-dependent RNA polymerase (RNAP) catalyzes the transcription of DNA into RNA using the four ribonucleoside triphosphates as substrates.</text>
</comment>
<comment type="catalytic activity">
    <reaction evidence="1">
        <text>RNA(n) + a ribonucleoside 5'-triphosphate = RNA(n+1) + diphosphate</text>
        <dbReference type="Rhea" id="RHEA:21248"/>
        <dbReference type="Rhea" id="RHEA-COMP:14527"/>
        <dbReference type="Rhea" id="RHEA-COMP:17342"/>
        <dbReference type="ChEBI" id="CHEBI:33019"/>
        <dbReference type="ChEBI" id="CHEBI:61557"/>
        <dbReference type="ChEBI" id="CHEBI:140395"/>
        <dbReference type="EC" id="2.7.7.6"/>
    </reaction>
</comment>
<comment type="subunit">
    <text evidence="1">Part of the RNA polymerase complex.</text>
</comment>
<comment type="subcellular location">
    <subcellularLocation>
        <location evidence="1">Cytoplasm</location>
    </subcellularLocation>
</comment>
<comment type="similarity">
    <text evidence="1">Belongs to the archaeal Rpo11/eukaryotic RPB11/RPC19 RNA polymerase subunit family.</text>
</comment>
<sequence>MEIKILKSERNYLELEIEGEDHTLGNLIAGTLRKISGVSFASYYQPHPLTDKIIVKILTDGSIAPKDALLKAIETVRVMASHYIDEIKGLSK</sequence>
<accession>C3N7I8</accession>
<protein>
    <recommendedName>
        <fullName evidence="1">DNA-directed RNA polymerase subunit Rpo11</fullName>
        <ecNumber evidence="1">2.7.7.6</ecNumber>
    </recommendedName>
    <alternativeName>
        <fullName evidence="1">DNA-directed RNA polymerase subunit L</fullName>
    </alternativeName>
</protein>
<feature type="chain" id="PRO_1000204673" description="DNA-directed RNA polymerase subunit Rpo11">
    <location>
        <begin position="1"/>
        <end position="92"/>
    </location>
</feature>
<reference key="1">
    <citation type="journal article" date="2009" name="Proc. Natl. Acad. Sci. U.S.A.">
        <title>Biogeography of the Sulfolobus islandicus pan-genome.</title>
        <authorList>
            <person name="Reno M.L."/>
            <person name="Held N.L."/>
            <person name="Fields C.J."/>
            <person name="Burke P.V."/>
            <person name="Whitaker R.J."/>
        </authorList>
    </citation>
    <scope>NUCLEOTIDE SEQUENCE [LARGE SCALE GENOMIC DNA]</scope>
    <source>
        <strain>Y.G.57.14 / Yellowstone #1</strain>
    </source>
</reference>
<evidence type="ECO:0000255" key="1">
    <source>
        <dbReference type="HAMAP-Rule" id="MF_00261"/>
    </source>
</evidence>
<gene>
    <name evidence="1" type="primary">rpo11</name>
    <name evidence="1" type="synonym">rpoL</name>
    <name type="ordered locus">YG5714_1926</name>
</gene>
<organism>
    <name type="scientific">Saccharolobus islandicus (strain Y.G.57.14 / Yellowstone #1)</name>
    <name type="common">Sulfolobus islandicus</name>
    <dbReference type="NCBI Taxonomy" id="439386"/>
    <lineage>
        <taxon>Archaea</taxon>
        <taxon>Thermoproteota</taxon>
        <taxon>Thermoprotei</taxon>
        <taxon>Sulfolobales</taxon>
        <taxon>Sulfolobaceae</taxon>
        <taxon>Saccharolobus</taxon>
    </lineage>
</organism>
<dbReference type="EC" id="2.7.7.6" evidence="1"/>
<dbReference type="EMBL" id="CP001403">
    <property type="protein sequence ID" value="ACP46182.1"/>
    <property type="molecule type" value="Genomic_DNA"/>
</dbReference>
<dbReference type="RefSeq" id="WP_012711784.1">
    <property type="nucleotide sequence ID" value="NC_012622.1"/>
</dbReference>
<dbReference type="SMR" id="C3N7I8"/>
<dbReference type="KEGG" id="siy:YG5714_1926"/>
<dbReference type="HOGENOM" id="CLU_090381_5_1_2"/>
<dbReference type="Proteomes" id="UP000002308">
    <property type="component" value="Chromosome"/>
</dbReference>
<dbReference type="GO" id="GO:0005737">
    <property type="term" value="C:cytoplasm"/>
    <property type="evidence" value="ECO:0007669"/>
    <property type="project" value="UniProtKB-SubCell"/>
</dbReference>
<dbReference type="GO" id="GO:0000428">
    <property type="term" value="C:DNA-directed RNA polymerase complex"/>
    <property type="evidence" value="ECO:0007669"/>
    <property type="project" value="UniProtKB-KW"/>
</dbReference>
<dbReference type="GO" id="GO:0003677">
    <property type="term" value="F:DNA binding"/>
    <property type="evidence" value="ECO:0007669"/>
    <property type="project" value="InterPro"/>
</dbReference>
<dbReference type="GO" id="GO:0003899">
    <property type="term" value="F:DNA-directed RNA polymerase activity"/>
    <property type="evidence" value="ECO:0007669"/>
    <property type="project" value="UniProtKB-UniRule"/>
</dbReference>
<dbReference type="GO" id="GO:0046983">
    <property type="term" value="F:protein dimerization activity"/>
    <property type="evidence" value="ECO:0007669"/>
    <property type="project" value="InterPro"/>
</dbReference>
<dbReference type="GO" id="GO:0006351">
    <property type="term" value="P:DNA-templated transcription"/>
    <property type="evidence" value="ECO:0007669"/>
    <property type="project" value="UniProtKB-UniRule"/>
</dbReference>
<dbReference type="Gene3D" id="3.30.1360.10">
    <property type="entry name" value="RNA polymerase, RBP11-like subunit"/>
    <property type="match status" value="1"/>
</dbReference>
<dbReference type="HAMAP" id="MF_00261">
    <property type="entry name" value="RNApol_arch_Rpo11"/>
    <property type="match status" value="1"/>
</dbReference>
<dbReference type="InterPro" id="IPR036603">
    <property type="entry name" value="RBP11-like"/>
</dbReference>
<dbReference type="InterPro" id="IPR009025">
    <property type="entry name" value="RBP11-like_dimer"/>
</dbReference>
<dbReference type="InterPro" id="IPR008193">
    <property type="entry name" value="RNA_pol_Rpb11_13-16kDa_CS"/>
</dbReference>
<dbReference type="InterPro" id="IPR022905">
    <property type="entry name" value="Rpo11-like"/>
</dbReference>
<dbReference type="NCBIfam" id="NF002233">
    <property type="entry name" value="PRK01146.1-1"/>
    <property type="match status" value="1"/>
</dbReference>
<dbReference type="PANTHER" id="PTHR13946">
    <property type="entry name" value="DNA-DIRECTED RNA POLYMERASE I,II,III"/>
    <property type="match status" value="1"/>
</dbReference>
<dbReference type="PANTHER" id="PTHR13946:SF28">
    <property type="entry name" value="DNA-DIRECTED RNA POLYMERASES I AND III SUBUNIT RPAC2"/>
    <property type="match status" value="1"/>
</dbReference>
<dbReference type="Pfam" id="PF13656">
    <property type="entry name" value="RNA_pol_L_2"/>
    <property type="match status" value="1"/>
</dbReference>
<dbReference type="SUPFAM" id="SSF55257">
    <property type="entry name" value="RBP11-like subunits of RNA polymerase"/>
    <property type="match status" value="1"/>
</dbReference>
<dbReference type="PROSITE" id="PS01154">
    <property type="entry name" value="RNA_POL_L_13KD"/>
    <property type="match status" value="1"/>
</dbReference>
<proteinExistence type="inferred from homology"/>
<keyword id="KW-0963">Cytoplasm</keyword>
<keyword id="KW-0240">DNA-directed RNA polymerase</keyword>
<keyword id="KW-0548">Nucleotidyltransferase</keyword>
<keyword id="KW-0804">Transcription</keyword>
<keyword id="KW-0808">Transferase</keyword>